<protein>
    <recommendedName>
        <fullName evidence="1">DNA-directed RNA polymerase subunit omega</fullName>
        <shortName evidence="1">RNAP omega subunit</shortName>
        <ecNumber evidence="1">2.7.7.6</ecNumber>
    </recommendedName>
    <alternativeName>
        <fullName evidence="1">RNA polymerase omega subunit</fullName>
    </alternativeName>
    <alternativeName>
        <fullName evidence="1">Transcriptase subunit omega</fullName>
    </alternativeName>
</protein>
<reference key="1">
    <citation type="journal article" date="2008" name="J. Bacteriol.">
        <title>The pangenome structure of Escherichia coli: comparative genomic analysis of E. coli commensal and pathogenic isolates.</title>
        <authorList>
            <person name="Rasko D.A."/>
            <person name="Rosovitz M.J."/>
            <person name="Myers G.S.A."/>
            <person name="Mongodin E.F."/>
            <person name="Fricke W.F."/>
            <person name="Gajer P."/>
            <person name="Crabtree J."/>
            <person name="Sebaihia M."/>
            <person name="Thomson N.R."/>
            <person name="Chaudhuri R."/>
            <person name="Henderson I.R."/>
            <person name="Sperandio V."/>
            <person name="Ravel J."/>
        </authorList>
    </citation>
    <scope>NUCLEOTIDE SEQUENCE [LARGE SCALE GENOMIC DNA]</scope>
    <source>
        <strain>E24377A / ETEC</strain>
    </source>
</reference>
<sequence>MARVTVQDAVEKIGNRFDLVLVAARRARQMQVGGKDPLVPEENDKTTVIALREIEEGLINNQILDVRERQEQQEQEAAELQAVTAIAEGRR</sequence>
<proteinExistence type="evidence at protein level"/>
<name>RPOZ_ECO24</name>
<comment type="function">
    <text evidence="1">Promotes RNA polymerase assembly. Latches the N- and C-terminal regions of the beta' subunit thereby facilitating its interaction with the beta and alpha subunits.</text>
</comment>
<comment type="catalytic activity">
    <reaction evidence="1">
        <text>RNA(n) + a ribonucleoside 5'-triphosphate = RNA(n+1) + diphosphate</text>
        <dbReference type="Rhea" id="RHEA:21248"/>
        <dbReference type="Rhea" id="RHEA-COMP:14527"/>
        <dbReference type="Rhea" id="RHEA-COMP:17342"/>
        <dbReference type="ChEBI" id="CHEBI:33019"/>
        <dbReference type="ChEBI" id="CHEBI:61557"/>
        <dbReference type="ChEBI" id="CHEBI:140395"/>
        <dbReference type="EC" id="2.7.7.6"/>
    </reaction>
</comment>
<comment type="subunit">
    <text evidence="1">The RNAP catalytic core consists of 2 alpha, 1 beta, 1 beta' and 1 omega subunit. When a sigma factor is associated with the core the holoenzyme is formed, which can initiate transcription.</text>
</comment>
<comment type="similarity">
    <text evidence="1">Belongs to the RNA polymerase subunit omega family.</text>
</comment>
<gene>
    <name evidence="1" type="primary">rpoZ</name>
    <name type="ordered locus">EcE24377A_4152</name>
</gene>
<keyword id="KW-0002">3D-structure</keyword>
<keyword id="KW-0240">DNA-directed RNA polymerase</keyword>
<keyword id="KW-0548">Nucleotidyltransferase</keyword>
<keyword id="KW-1185">Reference proteome</keyword>
<keyword id="KW-0804">Transcription</keyword>
<keyword id="KW-0808">Transferase</keyword>
<accession>A7ZTK1</accession>
<dbReference type="EC" id="2.7.7.6" evidence="1"/>
<dbReference type="EMBL" id="CP000800">
    <property type="protein sequence ID" value="ABV16956.1"/>
    <property type="molecule type" value="Genomic_DNA"/>
</dbReference>
<dbReference type="RefSeq" id="WP_000135058.1">
    <property type="nucleotide sequence ID" value="NC_009801.1"/>
</dbReference>
<dbReference type="PDB" id="4YFK">
    <property type="method" value="X-ray"/>
    <property type="resolution" value="3.57 A"/>
    <property type="chains" value="E/K=1-91"/>
</dbReference>
<dbReference type="PDB" id="4YFN">
    <property type="method" value="X-ray"/>
    <property type="resolution" value="3.82 A"/>
    <property type="chains" value="E/K=1-91"/>
</dbReference>
<dbReference type="PDB" id="4YFX">
    <property type="method" value="X-ray"/>
    <property type="resolution" value="3.84 A"/>
    <property type="chains" value="E/K=1-91"/>
</dbReference>
<dbReference type="PDBsum" id="4YFK"/>
<dbReference type="PDBsum" id="4YFN"/>
<dbReference type="PDBsum" id="4YFX"/>
<dbReference type="SMR" id="A7ZTK1"/>
<dbReference type="GeneID" id="98390719"/>
<dbReference type="KEGG" id="ecw:EcE24377A_4152"/>
<dbReference type="HOGENOM" id="CLU_125406_5_3_6"/>
<dbReference type="EvolutionaryTrace" id="A7ZTK1"/>
<dbReference type="Proteomes" id="UP000001122">
    <property type="component" value="Chromosome"/>
</dbReference>
<dbReference type="GO" id="GO:0000428">
    <property type="term" value="C:DNA-directed RNA polymerase complex"/>
    <property type="evidence" value="ECO:0007669"/>
    <property type="project" value="UniProtKB-KW"/>
</dbReference>
<dbReference type="GO" id="GO:0003677">
    <property type="term" value="F:DNA binding"/>
    <property type="evidence" value="ECO:0007669"/>
    <property type="project" value="UniProtKB-UniRule"/>
</dbReference>
<dbReference type="GO" id="GO:0003899">
    <property type="term" value="F:DNA-directed RNA polymerase activity"/>
    <property type="evidence" value="ECO:0007669"/>
    <property type="project" value="UniProtKB-UniRule"/>
</dbReference>
<dbReference type="GO" id="GO:0006351">
    <property type="term" value="P:DNA-templated transcription"/>
    <property type="evidence" value="ECO:0007669"/>
    <property type="project" value="UniProtKB-UniRule"/>
</dbReference>
<dbReference type="FunFam" id="3.90.940.10:FF:000001">
    <property type="entry name" value="DNA-directed RNA polymerase subunit omega"/>
    <property type="match status" value="1"/>
</dbReference>
<dbReference type="Gene3D" id="3.90.940.10">
    <property type="match status" value="1"/>
</dbReference>
<dbReference type="HAMAP" id="MF_00366">
    <property type="entry name" value="RNApol_bact_RpoZ"/>
    <property type="match status" value="1"/>
</dbReference>
<dbReference type="InterPro" id="IPR003716">
    <property type="entry name" value="DNA-dir_RNA_pol_omega"/>
</dbReference>
<dbReference type="InterPro" id="IPR006110">
    <property type="entry name" value="Pol_omega/Rpo6/RPB6"/>
</dbReference>
<dbReference type="InterPro" id="IPR036161">
    <property type="entry name" value="RPB6/omega-like_sf"/>
</dbReference>
<dbReference type="NCBIfam" id="TIGR00690">
    <property type="entry name" value="rpoZ"/>
    <property type="match status" value="1"/>
</dbReference>
<dbReference type="PANTHER" id="PTHR34476">
    <property type="entry name" value="DNA-DIRECTED RNA POLYMERASE SUBUNIT OMEGA"/>
    <property type="match status" value="1"/>
</dbReference>
<dbReference type="PANTHER" id="PTHR34476:SF1">
    <property type="entry name" value="DNA-DIRECTED RNA POLYMERASE SUBUNIT OMEGA"/>
    <property type="match status" value="1"/>
</dbReference>
<dbReference type="Pfam" id="PF01192">
    <property type="entry name" value="RNA_pol_Rpb6"/>
    <property type="match status" value="1"/>
</dbReference>
<dbReference type="SMART" id="SM01409">
    <property type="entry name" value="RNA_pol_Rpb6"/>
    <property type="match status" value="1"/>
</dbReference>
<dbReference type="SUPFAM" id="SSF63562">
    <property type="entry name" value="RPB6/omega subunit-like"/>
    <property type="match status" value="1"/>
</dbReference>
<feature type="chain" id="PRO_1000059910" description="DNA-directed RNA polymerase subunit omega">
    <location>
        <begin position="1"/>
        <end position="91"/>
    </location>
</feature>
<evidence type="ECO:0000255" key="1">
    <source>
        <dbReference type="HAMAP-Rule" id="MF_00366"/>
    </source>
</evidence>
<organism>
    <name type="scientific">Escherichia coli O139:H28 (strain E24377A / ETEC)</name>
    <dbReference type="NCBI Taxonomy" id="331111"/>
    <lineage>
        <taxon>Bacteria</taxon>
        <taxon>Pseudomonadati</taxon>
        <taxon>Pseudomonadota</taxon>
        <taxon>Gammaproteobacteria</taxon>
        <taxon>Enterobacterales</taxon>
        <taxon>Enterobacteriaceae</taxon>
        <taxon>Escherichia</taxon>
    </lineage>
</organism>